<proteinExistence type="inferred from homology"/>
<dbReference type="EMBL" id="CP000526">
    <property type="protein sequence ID" value="ABM50505.1"/>
    <property type="molecule type" value="Genomic_DNA"/>
</dbReference>
<dbReference type="RefSeq" id="WP_004191711.1">
    <property type="nucleotide sequence ID" value="NC_008785.1"/>
</dbReference>
<dbReference type="SMR" id="A1V4Q8"/>
<dbReference type="GeneID" id="93060530"/>
<dbReference type="KEGG" id="bmv:BMASAVP1_A1892"/>
<dbReference type="HOGENOM" id="CLU_078938_4_1_4"/>
<dbReference type="GO" id="GO:1990904">
    <property type="term" value="C:ribonucleoprotein complex"/>
    <property type="evidence" value="ECO:0007669"/>
    <property type="project" value="UniProtKB-KW"/>
</dbReference>
<dbReference type="GO" id="GO:0005840">
    <property type="term" value="C:ribosome"/>
    <property type="evidence" value="ECO:0007669"/>
    <property type="project" value="UniProtKB-KW"/>
</dbReference>
<dbReference type="GO" id="GO:0019843">
    <property type="term" value="F:rRNA binding"/>
    <property type="evidence" value="ECO:0007669"/>
    <property type="project" value="UniProtKB-UniRule"/>
</dbReference>
<dbReference type="GO" id="GO:0003735">
    <property type="term" value="F:structural constituent of ribosome"/>
    <property type="evidence" value="ECO:0007669"/>
    <property type="project" value="InterPro"/>
</dbReference>
<dbReference type="GO" id="GO:0006412">
    <property type="term" value="P:translation"/>
    <property type="evidence" value="ECO:0007669"/>
    <property type="project" value="UniProtKB-UniRule"/>
</dbReference>
<dbReference type="Gene3D" id="3.10.430.100">
    <property type="entry name" value="Ribosomal protein L9, C-terminal domain"/>
    <property type="match status" value="1"/>
</dbReference>
<dbReference type="Gene3D" id="3.40.5.10">
    <property type="entry name" value="Ribosomal protein L9, N-terminal domain"/>
    <property type="match status" value="1"/>
</dbReference>
<dbReference type="HAMAP" id="MF_00503">
    <property type="entry name" value="Ribosomal_bL9"/>
    <property type="match status" value="1"/>
</dbReference>
<dbReference type="InterPro" id="IPR000244">
    <property type="entry name" value="Ribosomal_bL9"/>
</dbReference>
<dbReference type="InterPro" id="IPR009027">
    <property type="entry name" value="Ribosomal_bL9/RNase_H1_N"/>
</dbReference>
<dbReference type="InterPro" id="IPR020594">
    <property type="entry name" value="Ribosomal_bL9_bac/chp"/>
</dbReference>
<dbReference type="InterPro" id="IPR020069">
    <property type="entry name" value="Ribosomal_bL9_C"/>
</dbReference>
<dbReference type="InterPro" id="IPR036791">
    <property type="entry name" value="Ribosomal_bL9_C_sf"/>
</dbReference>
<dbReference type="InterPro" id="IPR020070">
    <property type="entry name" value="Ribosomal_bL9_N"/>
</dbReference>
<dbReference type="InterPro" id="IPR036935">
    <property type="entry name" value="Ribosomal_bL9_N_sf"/>
</dbReference>
<dbReference type="NCBIfam" id="TIGR00158">
    <property type="entry name" value="L9"/>
    <property type="match status" value="1"/>
</dbReference>
<dbReference type="PANTHER" id="PTHR21368">
    <property type="entry name" value="50S RIBOSOMAL PROTEIN L9"/>
    <property type="match status" value="1"/>
</dbReference>
<dbReference type="Pfam" id="PF03948">
    <property type="entry name" value="Ribosomal_L9_C"/>
    <property type="match status" value="1"/>
</dbReference>
<dbReference type="Pfam" id="PF01281">
    <property type="entry name" value="Ribosomal_L9_N"/>
    <property type="match status" value="1"/>
</dbReference>
<dbReference type="SUPFAM" id="SSF55658">
    <property type="entry name" value="L9 N-domain-like"/>
    <property type="match status" value="1"/>
</dbReference>
<dbReference type="SUPFAM" id="SSF55653">
    <property type="entry name" value="Ribosomal protein L9 C-domain"/>
    <property type="match status" value="1"/>
</dbReference>
<dbReference type="PROSITE" id="PS00651">
    <property type="entry name" value="RIBOSOMAL_L9"/>
    <property type="match status" value="1"/>
</dbReference>
<organism>
    <name type="scientific">Burkholderia mallei (strain SAVP1)</name>
    <dbReference type="NCBI Taxonomy" id="320388"/>
    <lineage>
        <taxon>Bacteria</taxon>
        <taxon>Pseudomonadati</taxon>
        <taxon>Pseudomonadota</taxon>
        <taxon>Betaproteobacteria</taxon>
        <taxon>Burkholderiales</taxon>
        <taxon>Burkholderiaceae</taxon>
        <taxon>Burkholderia</taxon>
        <taxon>pseudomallei group</taxon>
    </lineage>
</organism>
<protein>
    <recommendedName>
        <fullName evidence="1">Large ribosomal subunit protein bL9</fullName>
    </recommendedName>
    <alternativeName>
        <fullName evidence="2">50S ribosomal protein L9</fullName>
    </alternativeName>
</protein>
<comment type="function">
    <text evidence="1">Binds to the 23S rRNA.</text>
</comment>
<comment type="similarity">
    <text evidence="1">Belongs to the bacterial ribosomal protein bL9 family.</text>
</comment>
<reference key="1">
    <citation type="journal article" date="2010" name="Genome Biol. Evol.">
        <title>Continuing evolution of Burkholderia mallei through genome reduction and large-scale rearrangements.</title>
        <authorList>
            <person name="Losada L."/>
            <person name="Ronning C.M."/>
            <person name="DeShazer D."/>
            <person name="Woods D."/>
            <person name="Fedorova N."/>
            <person name="Kim H.S."/>
            <person name="Shabalina S.A."/>
            <person name="Pearson T.R."/>
            <person name="Brinkac L."/>
            <person name="Tan P."/>
            <person name="Nandi T."/>
            <person name="Crabtree J."/>
            <person name="Badger J."/>
            <person name="Beckstrom-Sternberg S."/>
            <person name="Saqib M."/>
            <person name="Schutzer S.E."/>
            <person name="Keim P."/>
            <person name="Nierman W.C."/>
        </authorList>
    </citation>
    <scope>NUCLEOTIDE SEQUENCE [LARGE SCALE GENOMIC DNA]</scope>
    <source>
        <strain>SAVP1</strain>
    </source>
</reference>
<evidence type="ECO:0000255" key="1">
    <source>
        <dbReference type="HAMAP-Rule" id="MF_00503"/>
    </source>
</evidence>
<evidence type="ECO:0000305" key="2"/>
<gene>
    <name evidence="1" type="primary">rplI</name>
    <name type="ordered locus">BMASAVP1_A1892</name>
</gene>
<accession>A1V4Q8</accession>
<sequence>MQIILLEKVANLGNLGDIVKVKDGYARNFLIPNRKARRATKDAIAEFEVRRAELEKVAAEKLAAAQAVGEKLNGQTFEITQKSGVDGRLFGSVTNGDVAELLKKAGYEIEKAQVRMPEGPLKMIGEHGVQVALHTDVVVDVTVNVIGDHA</sequence>
<name>RL9_BURMS</name>
<feature type="chain" id="PRO_1000014753" description="Large ribosomal subunit protein bL9">
    <location>
        <begin position="1"/>
        <end position="150"/>
    </location>
</feature>
<keyword id="KW-0687">Ribonucleoprotein</keyword>
<keyword id="KW-0689">Ribosomal protein</keyword>
<keyword id="KW-0694">RNA-binding</keyword>
<keyword id="KW-0699">rRNA-binding</keyword>